<protein>
    <recommendedName>
        <fullName evidence="1">Ribosomal protein uS12 methylthiotransferase RimO</fullName>
        <shortName evidence="1">uS12 MTTase</shortName>
        <shortName evidence="1">uS12 methylthiotransferase</shortName>
        <ecNumber evidence="1">2.8.4.4</ecNumber>
    </recommendedName>
    <alternativeName>
        <fullName evidence="1">Ribosomal protein uS12 (aspartate-C(3))-methylthiotransferase</fullName>
    </alternativeName>
    <alternativeName>
        <fullName evidence="1">Ribosome maturation factor RimO</fullName>
    </alternativeName>
</protein>
<accession>Q11XC6</accession>
<feature type="chain" id="PRO_0000374797" description="Ribosomal protein uS12 methylthiotransferase RimO">
    <location>
        <begin position="1"/>
        <end position="437"/>
    </location>
</feature>
<feature type="domain" description="MTTase N-terminal" evidence="1">
    <location>
        <begin position="9"/>
        <end position="124"/>
    </location>
</feature>
<feature type="domain" description="Radical SAM core" evidence="2">
    <location>
        <begin position="137"/>
        <end position="367"/>
    </location>
</feature>
<feature type="domain" description="TRAM" evidence="1">
    <location>
        <begin position="370"/>
        <end position="437"/>
    </location>
</feature>
<feature type="binding site" evidence="1">
    <location>
        <position position="18"/>
    </location>
    <ligand>
        <name>[4Fe-4S] cluster</name>
        <dbReference type="ChEBI" id="CHEBI:49883"/>
        <label>1</label>
    </ligand>
</feature>
<feature type="binding site" evidence="1">
    <location>
        <position position="56"/>
    </location>
    <ligand>
        <name>[4Fe-4S] cluster</name>
        <dbReference type="ChEBI" id="CHEBI:49883"/>
        <label>1</label>
    </ligand>
</feature>
<feature type="binding site" evidence="1">
    <location>
        <position position="90"/>
    </location>
    <ligand>
        <name>[4Fe-4S] cluster</name>
        <dbReference type="ChEBI" id="CHEBI:49883"/>
        <label>1</label>
    </ligand>
</feature>
<feature type="binding site" evidence="1">
    <location>
        <position position="151"/>
    </location>
    <ligand>
        <name>[4Fe-4S] cluster</name>
        <dbReference type="ChEBI" id="CHEBI:49883"/>
        <label>2</label>
        <note>4Fe-4S-S-AdoMet</note>
    </ligand>
</feature>
<feature type="binding site" evidence="1">
    <location>
        <position position="155"/>
    </location>
    <ligand>
        <name>[4Fe-4S] cluster</name>
        <dbReference type="ChEBI" id="CHEBI:49883"/>
        <label>2</label>
        <note>4Fe-4S-S-AdoMet</note>
    </ligand>
</feature>
<feature type="binding site" evidence="1">
    <location>
        <position position="158"/>
    </location>
    <ligand>
        <name>[4Fe-4S] cluster</name>
        <dbReference type="ChEBI" id="CHEBI:49883"/>
        <label>2</label>
        <note>4Fe-4S-S-AdoMet</note>
    </ligand>
</feature>
<gene>
    <name evidence="1" type="primary">rimO</name>
    <name type="ordered locus">CHU_0653</name>
</gene>
<proteinExistence type="inferred from homology"/>
<dbReference type="EC" id="2.8.4.4" evidence="1"/>
<dbReference type="EMBL" id="CP000383">
    <property type="protein sequence ID" value="ABG57940.1"/>
    <property type="molecule type" value="Genomic_DNA"/>
</dbReference>
<dbReference type="RefSeq" id="WP_011584056.1">
    <property type="nucleotide sequence ID" value="NC_008255.1"/>
</dbReference>
<dbReference type="SMR" id="Q11XC6"/>
<dbReference type="STRING" id="269798.CHU_0653"/>
<dbReference type="KEGG" id="chu:CHU_0653"/>
<dbReference type="eggNOG" id="COG0621">
    <property type="taxonomic scope" value="Bacteria"/>
</dbReference>
<dbReference type="HOGENOM" id="CLU_018697_0_1_10"/>
<dbReference type="OrthoDB" id="9805215at2"/>
<dbReference type="Proteomes" id="UP000001822">
    <property type="component" value="Chromosome"/>
</dbReference>
<dbReference type="GO" id="GO:0005829">
    <property type="term" value="C:cytosol"/>
    <property type="evidence" value="ECO:0007669"/>
    <property type="project" value="TreeGrafter"/>
</dbReference>
<dbReference type="GO" id="GO:0051539">
    <property type="term" value="F:4 iron, 4 sulfur cluster binding"/>
    <property type="evidence" value="ECO:0007669"/>
    <property type="project" value="UniProtKB-UniRule"/>
</dbReference>
<dbReference type="GO" id="GO:0035599">
    <property type="term" value="F:aspartic acid methylthiotransferase activity"/>
    <property type="evidence" value="ECO:0007669"/>
    <property type="project" value="TreeGrafter"/>
</dbReference>
<dbReference type="GO" id="GO:0046872">
    <property type="term" value="F:metal ion binding"/>
    <property type="evidence" value="ECO:0007669"/>
    <property type="project" value="UniProtKB-KW"/>
</dbReference>
<dbReference type="GO" id="GO:0103039">
    <property type="term" value="F:protein methylthiotransferase activity"/>
    <property type="evidence" value="ECO:0007669"/>
    <property type="project" value="UniProtKB-EC"/>
</dbReference>
<dbReference type="GO" id="GO:0006400">
    <property type="term" value="P:tRNA modification"/>
    <property type="evidence" value="ECO:0007669"/>
    <property type="project" value="InterPro"/>
</dbReference>
<dbReference type="CDD" id="cd01335">
    <property type="entry name" value="Radical_SAM"/>
    <property type="match status" value="1"/>
</dbReference>
<dbReference type="FunFam" id="3.80.30.20:FF:000001">
    <property type="entry name" value="tRNA-2-methylthio-N(6)-dimethylallyladenosine synthase 2"/>
    <property type="match status" value="1"/>
</dbReference>
<dbReference type="Gene3D" id="3.40.50.12160">
    <property type="entry name" value="Methylthiotransferase, N-terminal domain"/>
    <property type="match status" value="1"/>
</dbReference>
<dbReference type="Gene3D" id="2.40.50.140">
    <property type="entry name" value="Nucleic acid-binding proteins"/>
    <property type="match status" value="1"/>
</dbReference>
<dbReference type="Gene3D" id="3.80.30.20">
    <property type="entry name" value="tm_1862 like domain"/>
    <property type="match status" value="1"/>
</dbReference>
<dbReference type="HAMAP" id="MF_01865">
    <property type="entry name" value="MTTase_RimO"/>
    <property type="match status" value="1"/>
</dbReference>
<dbReference type="InterPro" id="IPR006638">
    <property type="entry name" value="Elp3/MiaA/NifB-like_rSAM"/>
</dbReference>
<dbReference type="InterPro" id="IPR005839">
    <property type="entry name" value="Methylthiotransferase"/>
</dbReference>
<dbReference type="InterPro" id="IPR020612">
    <property type="entry name" value="Methylthiotransferase_CS"/>
</dbReference>
<dbReference type="InterPro" id="IPR013848">
    <property type="entry name" value="Methylthiotransferase_N"/>
</dbReference>
<dbReference type="InterPro" id="IPR038135">
    <property type="entry name" value="Methylthiotransferase_N_sf"/>
</dbReference>
<dbReference type="InterPro" id="IPR012340">
    <property type="entry name" value="NA-bd_OB-fold"/>
</dbReference>
<dbReference type="InterPro" id="IPR005840">
    <property type="entry name" value="Ribosomal_uS12_MeSTrfase_RimO"/>
</dbReference>
<dbReference type="InterPro" id="IPR007197">
    <property type="entry name" value="rSAM"/>
</dbReference>
<dbReference type="InterPro" id="IPR023404">
    <property type="entry name" value="rSAM_horseshoe"/>
</dbReference>
<dbReference type="InterPro" id="IPR002792">
    <property type="entry name" value="TRAM_dom"/>
</dbReference>
<dbReference type="NCBIfam" id="TIGR01125">
    <property type="entry name" value="30S ribosomal protein S12 methylthiotransferase RimO"/>
    <property type="match status" value="1"/>
</dbReference>
<dbReference type="NCBIfam" id="TIGR00089">
    <property type="entry name" value="MiaB/RimO family radical SAM methylthiotransferase"/>
    <property type="match status" value="1"/>
</dbReference>
<dbReference type="PANTHER" id="PTHR43837">
    <property type="entry name" value="RIBOSOMAL PROTEIN S12 METHYLTHIOTRANSFERASE RIMO"/>
    <property type="match status" value="1"/>
</dbReference>
<dbReference type="PANTHER" id="PTHR43837:SF1">
    <property type="entry name" value="RIBOSOMAL PROTEIN US12 METHYLTHIOTRANSFERASE RIMO"/>
    <property type="match status" value="1"/>
</dbReference>
<dbReference type="Pfam" id="PF04055">
    <property type="entry name" value="Radical_SAM"/>
    <property type="match status" value="1"/>
</dbReference>
<dbReference type="Pfam" id="PF18693">
    <property type="entry name" value="TRAM_2"/>
    <property type="match status" value="1"/>
</dbReference>
<dbReference type="Pfam" id="PF00919">
    <property type="entry name" value="UPF0004"/>
    <property type="match status" value="1"/>
</dbReference>
<dbReference type="SFLD" id="SFLDG01082">
    <property type="entry name" value="B12-binding_domain_containing"/>
    <property type="match status" value="1"/>
</dbReference>
<dbReference type="SFLD" id="SFLDG01061">
    <property type="entry name" value="methylthiotransferase"/>
    <property type="match status" value="1"/>
</dbReference>
<dbReference type="SFLD" id="SFLDF00274">
    <property type="entry name" value="ribosomal_protein_S12_methylth"/>
    <property type="match status" value="1"/>
</dbReference>
<dbReference type="SMART" id="SM00729">
    <property type="entry name" value="Elp3"/>
    <property type="match status" value="1"/>
</dbReference>
<dbReference type="SUPFAM" id="SSF102114">
    <property type="entry name" value="Radical SAM enzymes"/>
    <property type="match status" value="1"/>
</dbReference>
<dbReference type="PROSITE" id="PS51449">
    <property type="entry name" value="MTTASE_N"/>
    <property type="match status" value="1"/>
</dbReference>
<dbReference type="PROSITE" id="PS01278">
    <property type="entry name" value="MTTASE_RADICAL"/>
    <property type="match status" value="1"/>
</dbReference>
<dbReference type="PROSITE" id="PS51918">
    <property type="entry name" value="RADICAL_SAM"/>
    <property type="match status" value="1"/>
</dbReference>
<dbReference type="PROSITE" id="PS50926">
    <property type="entry name" value="TRAM"/>
    <property type="match status" value="1"/>
</dbReference>
<organism>
    <name type="scientific">Cytophaga hutchinsonii (strain ATCC 33406 / DSM 1761 / CIP 103989 / NBRC 15051 / NCIMB 9469 / D465)</name>
    <dbReference type="NCBI Taxonomy" id="269798"/>
    <lineage>
        <taxon>Bacteria</taxon>
        <taxon>Pseudomonadati</taxon>
        <taxon>Bacteroidota</taxon>
        <taxon>Cytophagia</taxon>
        <taxon>Cytophagales</taxon>
        <taxon>Cytophagaceae</taxon>
        <taxon>Cytophaga</taxon>
    </lineage>
</organism>
<reference key="1">
    <citation type="journal article" date="2007" name="Appl. Environ. Microbiol.">
        <title>Genome sequence of the cellulolytic gliding bacterium Cytophaga hutchinsonii.</title>
        <authorList>
            <person name="Xie G."/>
            <person name="Bruce D.C."/>
            <person name="Challacombe J.F."/>
            <person name="Chertkov O."/>
            <person name="Detter J.C."/>
            <person name="Gilna P."/>
            <person name="Han C.S."/>
            <person name="Lucas S."/>
            <person name="Misra M."/>
            <person name="Myers G.L."/>
            <person name="Richardson P."/>
            <person name="Tapia R."/>
            <person name="Thayer N."/>
            <person name="Thompson L.S."/>
            <person name="Brettin T.S."/>
            <person name="Henrissat B."/>
            <person name="Wilson D.B."/>
            <person name="McBride M.J."/>
        </authorList>
    </citation>
    <scope>NUCLEOTIDE SEQUENCE [LARGE SCALE GENOMIC DNA]</scope>
    <source>
        <strain>ATCC 33406 / DSM 1761 / JCM 20678 / CIP 103989 / IAM 12607 / NBRC 15051 / NCIMB 9469 / D465</strain>
    </source>
</reference>
<sequence length="437" mass="49620">MKAKGNQKTKVNIVTLGCSKNLVDSENLLTQLRGNGIEAEHESKNDNSNVVVINTCGFIDNAKQESIDTILRYIDAKENGLIDKIYVSGCLSQRYKDDMEREMPQVDAFFGSNELPAILKKFRADYKHELVGERLLTTPSHYAYVKIAEGCDRPCSFCAIPVMRGKHVSTPMEDLVKQAKGMAAKGTKELILIAQDLTYYGLDIYKKRNLSDLLKNLSDVEGIDWIRLQYAYPSGFPLDVLDVMAERSNICKYIDMPLQHGSSDMLKLMRRGIDRPKTEDLIKTIRDKVPGIAFRTTMIIGHPGETEKDFDELCSFVEEQRFDRLGAFTYSHEEHTHSYSMEDTIPQEEKEERQATIMSIQEGISAELNEKKIGNTYKVLFDRKEGGYFIGRTEHDSPEVDNEVMVSAKDQYVRIGDFANVKINDAAEFDLFGEIVK</sequence>
<keyword id="KW-0004">4Fe-4S</keyword>
<keyword id="KW-0963">Cytoplasm</keyword>
<keyword id="KW-0408">Iron</keyword>
<keyword id="KW-0411">Iron-sulfur</keyword>
<keyword id="KW-0479">Metal-binding</keyword>
<keyword id="KW-1185">Reference proteome</keyword>
<keyword id="KW-0949">S-adenosyl-L-methionine</keyword>
<keyword id="KW-0808">Transferase</keyword>
<comment type="function">
    <text evidence="1">Catalyzes the methylthiolation of an aspartic acid residue of ribosomal protein uS12.</text>
</comment>
<comment type="catalytic activity">
    <reaction evidence="1">
        <text>L-aspartate(89)-[ribosomal protein uS12]-hydrogen + (sulfur carrier)-SH + AH2 + 2 S-adenosyl-L-methionine = 3-methylsulfanyl-L-aspartate(89)-[ribosomal protein uS12]-hydrogen + (sulfur carrier)-H + 5'-deoxyadenosine + L-methionine + A + S-adenosyl-L-homocysteine + 2 H(+)</text>
        <dbReference type="Rhea" id="RHEA:37087"/>
        <dbReference type="Rhea" id="RHEA-COMP:10460"/>
        <dbReference type="Rhea" id="RHEA-COMP:10461"/>
        <dbReference type="Rhea" id="RHEA-COMP:14737"/>
        <dbReference type="Rhea" id="RHEA-COMP:14739"/>
        <dbReference type="ChEBI" id="CHEBI:13193"/>
        <dbReference type="ChEBI" id="CHEBI:15378"/>
        <dbReference type="ChEBI" id="CHEBI:17319"/>
        <dbReference type="ChEBI" id="CHEBI:17499"/>
        <dbReference type="ChEBI" id="CHEBI:29917"/>
        <dbReference type="ChEBI" id="CHEBI:29961"/>
        <dbReference type="ChEBI" id="CHEBI:57844"/>
        <dbReference type="ChEBI" id="CHEBI:57856"/>
        <dbReference type="ChEBI" id="CHEBI:59789"/>
        <dbReference type="ChEBI" id="CHEBI:64428"/>
        <dbReference type="ChEBI" id="CHEBI:73599"/>
        <dbReference type="EC" id="2.8.4.4"/>
    </reaction>
</comment>
<comment type="cofactor">
    <cofactor evidence="1">
        <name>[4Fe-4S] cluster</name>
        <dbReference type="ChEBI" id="CHEBI:49883"/>
    </cofactor>
    <text evidence="1">Binds 2 [4Fe-4S] clusters. One cluster is coordinated with 3 cysteines and an exchangeable S-adenosyl-L-methionine.</text>
</comment>
<comment type="subcellular location">
    <subcellularLocation>
        <location evidence="1">Cytoplasm</location>
    </subcellularLocation>
</comment>
<comment type="similarity">
    <text evidence="1">Belongs to the methylthiotransferase family. RimO subfamily.</text>
</comment>
<evidence type="ECO:0000255" key="1">
    <source>
        <dbReference type="HAMAP-Rule" id="MF_01865"/>
    </source>
</evidence>
<evidence type="ECO:0000255" key="2">
    <source>
        <dbReference type="PROSITE-ProRule" id="PRU01266"/>
    </source>
</evidence>
<name>RIMO_CYTH3</name>